<reference key="1">
    <citation type="journal article" date="2006" name="Lancet">
        <title>Complete genome sequence of USA300, an epidemic clone of community-acquired meticillin-resistant Staphylococcus aureus.</title>
        <authorList>
            <person name="Diep B.A."/>
            <person name="Gill S.R."/>
            <person name="Chang R.F."/>
            <person name="Phan T.H."/>
            <person name="Chen J.H."/>
            <person name="Davidson M.G."/>
            <person name="Lin F."/>
            <person name="Lin J."/>
            <person name="Carleton H.A."/>
            <person name="Mongodin E.F."/>
            <person name="Sensabaugh G.F."/>
            <person name="Perdreau-Remington F."/>
        </authorList>
    </citation>
    <scope>NUCLEOTIDE SEQUENCE [LARGE SCALE GENOMIC DNA]</scope>
    <source>
        <strain>USA300</strain>
    </source>
</reference>
<evidence type="ECO:0000305" key="1"/>
<name>Y2462_STAA3</name>
<comment type="cofactor">
    <cofactor evidence="1">
        <name>FMN</name>
        <dbReference type="ChEBI" id="CHEBI:58210"/>
    </cofactor>
</comment>
<comment type="similarity">
    <text evidence="1">Belongs to the nitroreductase family.</text>
</comment>
<organism>
    <name type="scientific">Staphylococcus aureus (strain USA300)</name>
    <dbReference type="NCBI Taxonomy" id="367830"/>
    <lineage>
        <taxon>Bacteria</taxon>
        <taxon>Bacillati</taxon>
        <taxon>Bacillota</taxon>
        <taxon>Bacilli</taxon>
        <taxon>Bacillales</taxon>
        <taxon>Staphylococcaceae</taxon>
        <taxon>Staphylococcus</taxon>
    </lineage>
</organism>
<proteinExistence type="inferred from homology"/>
<sequence length="223" mass="25389">MSNMNQTIMDAFHFRHATKQFDPQKKVSKEDFETILESGRLSPSSLGLEPWKFVVIQDQALRDELKAHSWGAAKQLDTASHFVLIFARKNVTSRSPYVQHMLRDIKKYEAQTIPAVEQKFDAFQADFHISDNDQALYDWSSKQTYIALGNMMTTAALLGIDSCPMEGFSLDTVTDILANKGILDTEQFGLSVMVAFGYRQQEPPKNKTRQAYEDVIEWVGPKE</sequence>
<protein>
    <recommendedName>
        <fullName>Putative NAD(P)H nitroreductase SAUSA300_2462</fullName>
        <ecNumber>1.-.-.-</ecNumber>
    </recommendedName>
</protein>
<gene>
    <name type="ordered locus">SAUSA300_2462</name>
</gene>
<feature type="chain" id="PRO_0000277538" description="Putative NAD(P)H nitroreductase SAUSA300_2462">
    <location>
        <begin position="1"/>
        <end position="223"/>
    </location>
</feature>
<keyword id="KW-0285">Flavoprotein</keyword>
<keyword id="KW-0288">FMN</keyword>
<keyword id="KW-0520">NAD</keyword>
<keyword id="KW-0521">NADP</keyword>
<keyword id="KW-0560">Oxidoreductase</keyword>
<accession>Q2FDY2</accession>
<dbReference type="EC" id="1.-.-.-"/>
<dbReference type="EMBL" id="CP000255">
    <property type="protein sequence ID" value="ABD22119.1"/>
    <property type="molecule type" value="Genomic_DNA"/>
</dbReference>
<dbReference type="RefSeq" id="WP_000069101.1">
    <property type="nucleotide sequence ID" value="NZ_CP027476.1"/>
</dbReference>
<dbReference type="SMR" id="Q2FDY2"/>
<dbReference type="KEGG" id="saa:SAUSA300_2462"/>
<dbReference type="HOGENOM" id="CLU_070764_4_1_9"/>
<dbReference type="Proteomes" id="UP000001939">
    <property type="component" value="Chromosome"/>
</dbReference>
<dbReference type="GO" id="GO:0005829">
    <property type="term" value="C:cytosol"/>
    <property type="evidence" value="ECO:0007669"/>
    <property type="project" value="TreeGrafter"/>
</dbReference>
<dbReference type="GO" id="GO:0046857">
    <property type="term" value="F:oxidoreductase activity, acting on other nitrogenous compounds as donors, with NAD or NADP as acceptor"/>
    <property type="evidence" value="ECO:0007669"/>
    <property type="project" value="TreeGrafter"/>
</dbReference>
<dbReference type="GO" id="GO:0046256">
    <property type="term" value="P:2,4,6-trinitrotoluene catabolic process"/>
    <property type="evidence" value="ECO:0007669"/>
    <property type="project" value="TreeGrafter"/>
</dbReference>
<dbReference type="CDD" id="cd02149">
    <property type="entry name" value="NfsB-like"/>
    <property type="match status" value="1"/>
</dbReference>
<dbReference type="FunFam" id="3.40.109.10:FF:000008">
    <property type="entry name" value="Putative NAD(P)H nitroreductase"/>
    <property type="match status" value="1"/>
</dbReference>
<dbReference type="Gene3D" id="3.40.109.10">
    <property type="entry name" value="NADH Oxidase"/>
    <property type="match status" value="1"/>
</dbReference>
<dbReference type="InterPro" id="IPR033878">
    <property type="entry name" value="NfsB-like"/>
</dbReference>
<dbReference type="InterPro" id="IPR029479">
    <property type="entry name" value="Nitroreductase"/>
</dbReference>
<dbReference type="InterPro" id="IPR000415">
    <property type="entry name" value="Nitroreductase-like"/>
</dbReference>
<dbReference type="InterPro" id="IPR050627">
    <property type="entry name" value="Nitroreductase/BluB"/>
</dbReference>
<dbReference type="PANTHER" id="PTHR23026">
    <property type="entry name" value="NADPH NITROREDUCTASE"/>
    <property type="match status" value="1"/>
</dbReference>
<dbReference type="PANTHER" id="PTHR23026:SF125">
    <property type="entry name" value="OXYGEN-INSENSITIVE NAD(P)H NITROREDUCTASE"/>
    <property type="match status" value="1"/>
</dbReference>
<dbReference type="Pfam" id="PF00881">
    <property type="entry name" value="Nitroreductase"/>
    <property type="match status" value="1"/>
</dbReference>
<dbReference type="SUPFAM" id="SSF55469">
    <property type="entry name" value="FMN-dependent nitroreductase-like"/>
    <property type="match status" value="1"/>
</dbReference>